<gene>
    <name evidence="1" type="primary">mtaD</name>
    <name type="ordered locus">CTC_02226</name>
</gene>
<feature type="chain" id="PRO_0000312451" description="5-methylthioadenosine/S-adenosylhomocysteine deaminase">
    <location>
        <begin position="1"/>
        <end position="429"/>
    </location>
</feature>
<feature type="binding site" evidence="1">
    <location>
        <position position="65"/>
    </location>
    <ligand>
        <name>Zn(2+)</name>
        <dbReference type="ChEBI" id="CHEBI:29105"/>
    </ligand>
</feature>
<feature type="binding site" evidence="1">
    <location>
        <position position="67"/>
    </location>
    <ligand>
        <name>Zn(2+)</name>
        <dbReference type="ChEBI" id="CHEBI:29105"/>
    </ligand>
</feature>
<feature type="binding site" evidence="1">
    <location>
        <position position="94"/>
    </location>
    <ligand>
        <name>substrate</name>
    </ligand>
</feature>
<feature type="binding site" evidence="1">
    <location>
        <position position="182"/>
    </location>
    <ligand>
        <name>substrate</name>
    </ligand>
</feature>
<feature type="binding site" evidence="1">
    <location>
        <position position="209"/>
    </location>
    <ligand>
        <name>Zn(2+)</name>
        <dbReference type="ChEBI" id="CHEBI:29105"/>
    </ligand>
</feature>
<feature type="binding site" evidence="1">
    <location>
        <position position="212"/>
    </location>
    <ligand>
        <name>substrate</name>
    </ligand>
</feature>
<feature type="binding site" evidence="1">
    <location>
        <position position="297"/>
    </location>
    <ligand>
        <name>substrate</name>
    </ligand>
</feature>
<feature type="binding site" evidence="1">
    <location>
        <position position="297"/>
    </location>
    <ligand>
        <name>Zn(2+)</name>
        <dbReference type="ChEBI" id="CHEBI:29105"/>
    </ligand>
</feature>
<protein>
    <recommendedName>
        <fullName evidence="1">5-methylthioadenosine/S-adenosylhomocysteine deaminase</fullName>
        <shortName evidence="1">MTA/SAH deaminase</shortName>
        <ecNumber evidence="1">3.5.4.28</ecNumber>
        <ecNumber evidence="1">3.5.4.31</ecNumber>
    </recommendedName>
</protein>
<sequence length="429" mass="48177">MSILIENVMIVTMDEEQDVIKEGYILIKEDKIKEVNLGAYLGNKENLYIINGEGRCAIPGLVNAHTHAGMTIFRGYGEGLPLMRWLNEKIWPIESKLKGEHVKIATELAALEMLRSGTTCFNDMYFYEEQVVKVAKEFNIRGIIGVSIMGDSWEHQLKEAIDIDKKIKEDKSGLLDSMIAPHSPYTLSKEALESIGKEAKLQNKNIHIHISETQDEVNIIKEKYNKTPCEFLQSVGIFNSKVAAAHCVYLTDEDMNILKQNGTSVIYNPQSNMKLASGIAKIAEMIDMDINVCLGTDGTSSNNNLNMIEEMETGTILQKLYYKDATKLSAKKALEMATYNGAKALINNKKLGKIKKDYLADIALLDLNKPNMLPVNDIHSNIVFSANGSEIDYVIVNGSVVMEKGEFKHIDEEKVLYNFKEMCKDIFNN</sequence>
<keyword id="KW-0378">Hydrolase</keyword>
<keyword id="KW-0479">Metal-binding</keyword>
<keyword id="KW-1185">Reference proteome</keyword>
<keyword id="KW-0862">Zinc</keyword>
<evidence type="ECO:0000255" key="1">
    <source>
        <dbReference type="HAMAP-Rule" id="MF_01281"/>
    </source>
</evidence>
<evidence type="ECO:0000305" key="2"/>
<comment type="function">
    <text evidence="1">Catalyzes the deamination of 5-methylthioadenosine and S-adenosyl-L-homocysteine into 5-methylthioinosine and S-inosyl-L-homocysteine, respectively. Is also able to deaminate adenosine.</text>
</comment>
<comment type="catalytic activity">
    <reaction evidence="1">
        <text>S-adenosyl-L-homocysteine + H2O + H(+) = S-inosyl-L-homocysteine + NH4(+)</text>
        <dbReference type="Rhea" id="RHEA:20716"/>
        <dbReference type="ChEBI" id="CHEBI:15377"/>
        <dbReference type="ChEBI" id="CHEBI:15378"/>
        <dbReference type="ChEBI" id="CHEBI:28938"/>
        <dbReference type="ChEBI" id="CHEBI:57856"/>
        <dbReference type="ChEBI" id="CHEBI:57985"/>
        <dbReference type="EC" id="3.5.4.28"/>
    </reaction>
</comment>
<comment type="catalytic activity">
    <reaction evidence="1">
        <text>S-methyl-5'-thioadenosine + H2O + H(+) = S-methyl-5'-thioinosine + NH4(+)</text>
        <dbReference type="Rhea" id="RHEA:25025"/>
        <dbReference type="ChEBI" id="CHEBI:15377"/>
        <dbReference type="ChEBI" id="CHEBI:15378"/>
        <dbReference type="ChEBI" id="CHEBI:17509"/>
        <dbReference type="ChEBI" id="CHEBI:28938"/>
        <dbReference type="ChEBI" id="CHEBI:48595"/>
        <dbReference type="EC" id="3.5.4.31"/>
    </reaction>
</comment>
<comment type="cofactor">
    <cofactor evidence="1">
        <name>Zn(2+)</name>
        <dbReference type="ChEBI" id="CHEBI:29105"/>
    </cofactor>
    <text evidence="1">Binds 1 zinc ion per subunit.</text>
</comment>
<comment type="similarity">
    <text evidence="1">Belongs to the metallo-dependent hydrolases superfamily. MTA/SAH deaminase family.</text>
</comment>
<comment type="sequence caution" evidence="2">
    <conflict type="erroneous initiation">
        <sequence resource="EMBL-CDS" id="AAO36708"/>
    </conflict>
</comment>
<accession>Q891Y7</accession>
<dbReference type="EC" id="3.5.4.28" evidence="1"/>
<dbReference type="EC" id="3.5.4.31" evidence="1"/>
<dbReference type="EMBL" id="AE015927">
    <property type="protein sequence ID" value="AAO36708.1"/>
    <property type="status" value="ALT_INIT"/>
    <property type="molecule type" value="Genomic_DNA"/>
</dbReference>
<dbReference type="RefSeq" id="WP_035109029.1">
    <property type="nucleotide sequence ID" value="NC_004557.1"/>
</dbReference>
<dbReference type="SMR" id="Q891Y7"/>
<dbReference type="STRING" id="212717.CTC_02226"/>
<dbReference type="GeneID" id="24252825"/>
<dbReference type="KEGG" id="ctc:CTC_02226"/>
<dbReference type="HOGENOM" id="CLU_012358_2_1_9"/>
<dbReference type="OrthoDB" id="9807210at2"/>
<dbReference type="Proteomes" id="UP000001412">
    <property type="component" value="Chromosome"/>
</dbReference>
<dbReference type="GO" id="GO:0090614">
    <property type="term" value="F:5'-methylthioadenosine deaminase activity"/>
    <property type="evidence" value="ECO:0007669"/>
    <property type="project" value="UniProtKB-UniRule"/>
</dbReference>
<dbReference type="GO" id="GO:0046872">
    <property type="term" value="F:metal ion binding"/>
    <property type="evidence" value="ECO:0007669"/>
    <property type="project" value="UniProtKB-KW"/>
</dbReference>
<dbReference type="GO" id="GO:0050270">
    <property type="term" value="F:S-adenosylhomocysteine deaminase activity"/>
    <property type="evidence" value="ECO:0007669"/>
    <property type="project" value="UniProtKB-UniRule"/>
</dbReference>
<dbReference type="CDD" id="cd01298">
    <property type="entry name" value="ATZ_TRZ_like"/>
    <property type="match status" value="1"/>
</dbReference>
<dbReference type="FunFam" id="3.20.20.140:FF:000014">
    <property type="entry name" value="5-methylthioadenosine/S-adenosylhomocysteine deaminase"/>
    <property type="match status" value="1"/>
</dbReference>
<dbReference type="Gene3D" id="3.20.20.140">
    <property type="entry name" value="Metal-dependent hydrolases"/>
    <property type="match status" value="1"/>
</dbReference>
<dbReference type="Gene3D" id="2.30.40.10">
    <property type="entry name" value="Urease, subunit C, domain 1"/>
    <property type="match status" value="1"/>
</dbReference>
<dbReference type="HAMAP" id="MF_01281">
    <property type="entry name" value="MTA_SAH_deamin"/>
    <property type="match status" value="1"/>
</dbReference>
<dbReference type="InterPro" id="IPR006680">
    <property type="entry name" value="Amidohydro-rel"/>
</dbReference>
<dbReference type="InterPro" id="IPR023512">
    <property type="entry name" value="Deaminase_MtaD/DadD"/>
</dbReference>
<dbReference type="InterPro" id="IPR011059">
    <property type="entry name" value="Metal-dep_hydrolase_composite"/>
</dbReference>
<dbReference type="InterPro" id="IPR032466">
    <property type="entry name" value="Metal_Hydrolase"/>
</dbReference>
<dbReference type="InterPro" id="IPR050287">
    <property type="entry name" value="MTA/SAH_deaminase"/>
</dbReference>
<dbReference type="PANTHER" id="PTHR43794:SF11">
    <property type="entry name" value="AMIDOHYDROLASE-RELATED DOMAIN-CONTAINING PROTEIN"/>
    <property type="match status" value="1"/>
</dbReference>
<dbReference type="PANTHER" id="PTHR43794">
    <property type="entry name" value="AMINOHYDROLASE SSNA-RELATED"/>
    <property type="match status" value="1"/>
</dbReference>
<dbReference type="Pfam" id="PF01979">
    <property type="entry name" value="Amidohydro_1"/>
    <property type="match status" value="1"/>
</dbReference>
<dbReference type="SUPFAM" id="SSF51338">
    <property type="entry name" value="Composite domain of metallo-dependent hydrolases"/>
    <property type="match status" value="1"/>
</dbReference>
<dbReference type="SUPFAM" id="SSF51556">
    <property type="entry name" value="Metallo-dependent hydrolases"/>
    <property type="match status" value="1"/>
</dbReference>
<name>MTAD_CLOTE</name>
<reference key="1">
    <citation type="journal article" date="2003" name="Proc. Natl. Acad. Sci. U.S.A.">
        <title>The genome sequence of Clostridium tetani, the causative agent of tetanus disease.</title>
        <authorList>
            <person name="Brueggemann H."/>
            <person name="Baeumer S."/>
            <person name="Fricke W.F."/>
            <person name="Wiezer A."/>
            <person name="Liesegang H."/>
            <person name="Decker I."/>
            <person name="Herzberg C."/>
            <person name="Martinez-Arias R."/>
            <person name="Merkl R."/>
            <person name="Henne A."/>
            <person name="Gottschalk G."/>
        </authorList>
    </citation>
    <scope>NUCLEOTIDE SEQUENCE [LARGE SCALE GENOMIC DNA]</scope>
    <source>
        <strain>Massachusetts / E88</strain>
    </source>
</reference>
<organism>
    <name type="scientific">Clostridium tetani (strain Massachusetts / E88)</name>
    <dbReference type="NCBI Taxonomy" id="212717"/>
    <lineage>
        <taxon>Bacteria</taxon>
        <taxon>Bacillati</taxon>
        <taxon>Bacillota</taxon>
        <taxon>Clostridia</taxon>
        <taxon>Eubacteriales</taxon>
        <taxon>Clostridiaceae</taxon>
        <taxon>Clostridium</taxon>
    </lineage>
</organism>
<proteinExistence type="inferred from homology"/>